<accession>Q4V8E0</accession>
<comment type="function">
    <text evidence="2 3">Part of TspanC8 subgroup, composed of 6 members that interact with the transmembrane metalloprotease ADAM10. This interaction is required for ADAM10 exit from the endoplasmic reticulum and for enzymatic maturation and trafficking to the cell surface as well as substrate specificity. Different TspanC8/ADAM10 complexes have distinct substrates (By similarity). Seems to regulate VE-cadherin expression in endothelial cells probably through interaction with ADAM10, promoting leukocyte transmigration (By similarity).</text>
</comment>
<comment type="subunit">
    <text evidence="3">Interacts with ADAM10; the interaction influences ADAM10 substrate specificity, endocytosis and turnover.</text>
</comment>
<comment type="subcellular location">
    <subcellularLocation>
        <location evidence="3">Cell membrane</location>
        <topology evidence="4">Multi-pass membrane protein</topology>
    </subcellularLocation>
</comment>
<comment type="similarity">
    <text evidence="5">Belongs to the tetraspanin (TM4SF) family.</text>
</comment>
<gene>
    <name type="primary">Tspan17</name>
    <name type="synonym">Fbxo23</name>
</gene>
<protein>
    <recommendedName>
        <fullName>Tetraspanin-17</fullName>
        <shortName>Tspan-17</shortName>
    </recommendedName>
    <alternativeName>
        <fullName>F-box only protein 23</fullName>
    </alternativeName>
</protein>
<dbReference type="EMBL" id="BC097431">
    <property type="protein sequence ID" value="AAH97431.1"/>
    <property type="molecule type" value="mRNA"/>
</dbReference>
<dbReference type="RefSeq" id="NP_001013156.2">
    <property type="nucleotide sequence ID" value="NM_001013138.2"/>
</dbReference>
<dbReference type="SMR" id="Q4V8E0"/>
<dbReference type="FunCoup" id="Q4V8E0">
    <property type="interactions" value="1119"/>
</dbReference>
<dbReference type="STRING" id="10116.ENSRNOP00000071050"/>
<dbReference type="GlyCosmos" id="Q4V8E0">
    <property type="glycosylation" value="2 sites, No reported glycans"/>
</dbReference>
<dbReference type="GlyGen" id="Q4V8E0">
    <property type="glycosylation" value="2 sites"/>
</dbReference>
<dbReference type="PaxDb" id="10116-ENSRNOP00000049736"/>
<dbReference type="GeneID" id="306771"/>
<dbReference type="KEGG" id="rno:306771"/>
<dbReference type="UCSC" id="RGD:1311167">
    <property type="organism name" value="rat"/>
</dbReference>
<dbReference type="AGR" id="RGD:1311167"/>
<dbReference type="CTD" id="26262"/>
<dbReference type="RGD" id="1311167">
    <property type="gene designation" value="Tspan17"/>
</dbReference>
<dbReference type="VEuPathDB" id="HostDB:ENSRNOG00000018122"/>
<dbReference type="eggNOG" id="KOG3882">
    <property type="taxonomic scope" value="Eukaryota"/>
</dbReference>
<dbReference type="HOGENOM" id="CLU_055524_0_2_1"/>
<dbReference type="InParanoid" id="Q4V8E0"/>
<dbReference type="OrthoDB" id="2014092at2759"/>
<dbReference type="PhylomeDB" id="Q4V8E0"/>
<dbReference type="PRO" id="PR:Q4V8E0"/>
<dbReference type="Proteomes" id="UP000002494">
    <property type="component" value="Chromosome 17"/>
</dbReference>
<dbReference type="Bgee" id="ENSRNOG00000018122">
    <property type="expression patterns" value="Expressed in frontal cortex and 19 other cell types or tissues"/>
</dbReference>
<dbReference type="ExpressionAtlas" id="Q4V8E0">
    <property type="expression patterns" value="baseline and differential"/>
</dbReference>
<dbReference type="GO" id="GO:0005886">
    <property type="term" value="C:plasma membrane"/>
    <property type="evidence" value="ECO:0000318"/>
    <property type="project" value="GO_Central"/>
</dbReference>
<dbReference type="GO" id="GO:0019899">
    <property type="term" value="F:enzyme binding"/>
    <property type="evidence" value="ECO:0000266"/>
    <property type="project" value="RGD"/>
</dbReference>
<dbReference type="GO" id="GO:0072594">
    <property type="term" value="P:establishment of protein localization to organelle"/>
    <property type="evidence" value="ECO:0000266"/>
    <property type="project" value="RGD"/>
</dbReference>
<dbReference type="GO" id="GO:0051604">
    <property type="term" value="P:protein maturation"/>
    <property type="evidence" value="ECO:0000266"/>
    <property type="project" value="RGD"/>
</dbReference>
<dbReference type="GO" id="GO:0051043">
    <property type="term" value="P:regulation of membrane protein ectodomain proteolysis"/>
    <property type="evidence" value="ECO:0000266"/>
    <property type="project" value="RGD"/>
</dbReference>
<dbReference type="CDD" id="cd03159">
    <property type="entry name" value="TM4SF9_like_LEL"/>
    <property type="match status" value="1"/>
</dbReference>
<dbReference type="FunFam" id="1.10.1450.10:FF:000001">
    <property type="entry name" value="Tetraspanin"/>
    <property type="match status" value="1"/>
</dbReference>
<dbReference type="Gene3D" id="1.10.1450.10">
    <property type="entry name" value="Tetraspanin"/>
    <property type="match status" value="1"/>
</dbReference>
<dbReference type="InterPro" id="IPR018499">
    <property type="entry name" value="Tetraspanin/Peripherin"/>
</dbReference>
<dbReference type="InterPro" id="IPR000301">
    <property type="entry name" value="Tetraspanin_animals"/>
</dbReference>
<dbReference type="InterPro" id="IPR018503">
    <property type="entry name" value="Tetraspanin_CS"/>
</dbReference>
<dbReference type="InterPro" id="IPR008952">
    <property type="entry name" value="Tetraspanin_EC2_sf"/>
</dbReference>
<dbReference type="PANTHER" id="PTHR19282">
    <property type="entry name" value="TETRASPANIN"/>
    <property type="match status" value="1"/>
</dbReference>
<dbReference type="PANTHER" id="PTHR19282:SF470">
    <property type="entry name" value="TETRASPANIN-17"/>
    <property type="match status" value="1"/>
</dbReference>
<dbReference type="Pfam" id="PF00335">
    <property type="entry name" value="Tetraspanin"/>
    <property type="match status" value="1"/>
</dbReference>
<dbReference type="PIRSF" id="PIRSF002419">
    <property type="entry name" value="Tetraspanin"/>
    <property type="match status" value="1"/>
</dbReference>
<dbReference type="PRINTS" id="PR00259">
    <property type="entry name" value="TMFOUR"/>
</dbReference>
<dbReference type="SUPFAM" id="SSF48652">
    <property type="entry name" value="Tetraspanin"/>
    <property type="match status" value="1"/>
</dbReference>
<dbReference type="PROSITE" id="PS00421">
    <property type="entry name" value="TM4_1"/>
    <property type="match status" value="1"/>
</dbReference>
<proteinExistence type="evidence at transcript level"/>
<name>TSN17_RAT</name>
<reference key="1">
    <citation type="journal article" date="2004" name="Genome Res.">
        <title>The status, quality, and expansion of the NIH full-length cDNA project: the Mammalian Gene Collection (MGC).</title>
        <authorList>
            <consortium name="The MGC Project Team"/>
        </authorList>
    </citation>
    <scope>NUCLEOTIDE SEQUENCE [LARGE SCALE MRNA]</scope>
    <source>
        <tissue>Testis</tissue>
    </source>
</reference>
<keyword id="KW-1003">Cell membrane</keyword>
<keyword id="KW-1015">Disulfide bond</keyword>
<keyword id="KW-0325">Glycoprotein</keyword>
<keyword id="KW-0472">Membrane</keyword>
<keyword id="KW-1185">Reference proteome</keyword>
<keyword id="KW-0812">Transmembrane</keyword>
<keyword id="KW-1133">Transmembrane helix</keyword>
<sequence>MPGKHQQFQDPEVGCCGKYFLFGFNIVFWVLGALFLAIGLWAWGEKGVLSNISGLTDLGGLDPVWLFVVIGGIMSVLGFAGCIGALRENTFLLKFFSVFLGLIFFLELAAGILAFVFKDWIRDQLNLFINNNVKAYRDDIDLQNLIDFAQEYWSCCGARGPNDWNLNIYFNCTDLNPSRERCGVPFSCCVRDPAEDVLNTQCGYDIRLKLELEQQGSIYTKGCVGQFEKWLQDNLIVVAGVLVAIALLQICGICLAQNLVSDIEAVKANW</sequence>
<evidence type="ECO:0000250" key="1">
    <source>
        <dbReference type="UniProtKB" id="O95858"/>
    </source>
</evidence>
<evidence type="ECO:0000250" key="2">
    <source>
        <dbReference type="UniProtKB" id="Q96FV3"/>
    </source>
</evidence>
<evidence type="ECO:0000250" key="3">
    <source>
        <dbReference type="UniProtKB" id="Q9D7W4"/>
    </source>
</evidence>
<evidence type="ECO:0000255" key="4"/>
<evidence type="ECO:0000305" key="5"/>
<feature type="chain" id="PRO_0000287715" description="Tetraspanin-17">
    <location>
        <begin position="1"/>
        <end position="270"/>
    </location>
</feature>
<feature type="topological domain" description="Cytoplasmic" evidence="4">
    <location>
        <begin position="1"/>
        <end position="19"/>
    </location>
</feature>
<feature type="transmembrane region" description="Helical" evidence="4">
    <location>
        <begin position="20"/>
        <end position="40"/>
    </location>
</feature>
<feature type="topological domain" description="Extracellular" evidence="4">
    <location>
        <begin position="41"/>
        <end position="63"/>
    </location>
</feature>
<feature type="transmembrane region" description="Helical" evidence="4">
    <location>
        <begin position="64"/>
        <end position="84"/>
    </location>
</feature>
<feature type="topological domain" description="Cytoplasmic" evidence="4">
    <location>
        <begin position="85"/>
        <end position="94"/>
    </location>
</feature>
<feature type="transmembrane region" description="Helical" evidence="4">
    <location>
        <begin position="95"/>
        <end position="115"/>
    </location>
</feature>
<feature type="topological domain" description="Extracellular" evidence="4">
    <location>
        <begin position="116"/>
        <end position="234"/>
    </location>
</feature>
<feature type="transmembrane region" description="Helical" evidence="4">
    <location>
        <begin position="235"/>
        <end position="255"/>
    </location>
</feature>
<feature type="topological domain" description="Cytoplasmic" evidence="4">
    <location>
        <begin position="256"/>
        <end position="270"/>
    </location>
</feature>
<feature type="glycosylation site" description="N-linked (GlcNAc...) asparagine" evidence="4">
    <location>
        <position position="51"/>
    </location>
</feature>
<feature type="glycosylation site" description="N-linked (GlcNAc...) asparagine" evidence="4">
    <location>
        <position position="171"/>
    </location>
</feature>
<feature type="disulfide bond" evidence="1">
    <location>
        <begin position="155"/>
        <end position="223"/>
    </location>
</feature>
<feature type="disulfide bond" evidence="1">
    <location>
        <begin position="156"/>
        <end position="188"/>
    </location>
</feature>
<feature type="disulfide bond" evidence="1">
    <location>
        <begin position="172"/>
        <end position="182"/>
    </location>
</feature>
<feature type="disulfide bond" evidence="1">
    <location>
        <begin position="189"/>
        <end position="202"/>
    </location>
</feature>
<organism>
    <name type="scientific">Rattus norvegicus</name>
    <name type="common">Rat</name>
    <dbReference type="NCBI Taxonomy" id="10116"/>
    <lineage>
        <taxon>Eukaryota</taxon>
        <taxon>Metazoa</taxon>
        <taxon>Chordata</taxon>
        <taxon>Craniata</taxon>
        <taxon>Vertebrata</taxon>
        <taxon>Euteleostomi</taxon>
        <taxon>Mammalia</taxon>
        <taxon>Eutheria</taxon>
        <taxon>Euarchontoglires</taxon>
        <taxon>Glires</taxon>
        <taxon>Rodentia</taxon>
        <taxon>Myomorpha</taxon>
        <taxon>Muroidea</taxon>
        <taxon>Muridae</taxon>
        <taxon>Murinae</taxon>
        <taxon>Rattus</taxon>
    </lineage>
</organism>